<organism>
    <name type="scientific">Salmonella typhi</name>
    <dbReference type="NCBI Taxonomy" id="90370"/>
    <lineage>
        <taxon>Bacteria</taxon>
        <taxon>Pseudomonadati</taxon>
        <taxon>Pseudomonadota</taxon>
        <taxon>Gammaproteobacteria</taxon>
        <taxon>Enterobacterales</taxon>
        <taxon>Enterobacteriaceae</taxon>
        <taxon>Salmonella</taxon>
    </lineage>
</organism>
<keyword id="KW-0963">Cytoplasm</keyword>
<keyword id="KW-0255">Endonuclease</keyword>
<keyword id="KW-0378">Hydrolase</keyword>
<keyword id="KW-0460">Magnesium</keyword>
<keyword id="KW-0479">Metal-binding</keyword>
<keyword id="KW-0540">Nuclease</keyword>
<reference key="1">
    <citation type="journal article" date="2001" name="Nature">
        <title>Complete genome sequence of a multiple drug resistant Salmonella enterica serovar Typhi CT18.</title>
        <authorList>
            <person name="Parkhill J."/>
            <person name="Dougan G."/>
            <person name="James K.D."/>
            <person name="Thomson N.R."/>
            <person name="Pickard D."/>
            <person name="Wain J."/>
            <person name="Churcher C.M."/>
            <person name="Mungall K.L."/>
            <person name="Bentley S.D."/>
            <person name="Holden M.T.G."/>
            <person name="Sebaihia M."/>
            <person name="Baker S."/>
            <person name="Basham D."/>
            <person name="Brooks K."/>
            <person name="Chillingworth T."/>
            <person name="Connerton P."/>
            <person name="Cronin A."/>
            <person name="Davis P."/>
            <person name="Davies R.M."/>
            <person name="Dowd L."/>
            <person name="White N."/>
            <person name="Farrar J."/>
            <person name="Feltwell T."/>
            <person name="Hamlin N."/>
            <person name="Haque A."/>
            <person name="Hien T.T."/>
            <person name="Holroyd S."/>
            <person name="Jagels K."/>
            <person name="Krogh A."/>
            <person name="Larsen T.S."/>
            <person name="Leather S."/>
            <person name="Moule S."/>
            <person name="O'Gaora P."/>
            <person name="Parry C."/>
            <person name="Quail M.A."/>
            <person name="Rutherford K.M."/>
            <person name="Simmonds M."/>
            <person name="Skelton J."/>
            <person name="Stevens K."/>
            <person name="Whitehead S."/>
            <person name="Barrell B.G."/>
        </authorList>
    </citation>
    <scope>NUCLEOTIDE SEQUENCE [LARGE SCALE GENOMIC DNA]</scope>
    <source>
        <strain>CT18</strain>
    </source>
</reference>
<reference key="2">
    <citation type="journal article" date="2003" name="J. Bacteriol.">
        <title>Comparative genomics of Salmonella enterica serovar Typhi strains Ty2 and CT18.</title>
        <authorList>
            <person name="Deng W."/>
            <person name="Liou S.-R."/>
            <person name="Plunkett G. III"/>
            <person name="Mayhew G.F."/>
            <person name="Rose D.J."/>
            <person name="Burland V."/>
            <person name="Kodoyianni V."/>
            <person name="Schwartz D.C."/>
            <person name="Blattner F.R."/>
        </authorList>
    </citation>
    <scope>NUCLEOTIDE SEQUENCE [LARGE SCALE GENOMIC DNA]</scope>
    <source>
        <strain>ATCC 700931 / Ty2</strain>
    </source>
</reference>
<evidence type="ECO:0000250" key="1"/>
<evidence type="ECO:0000255" key="2">
    <source>
        <dbReference type="PROSITE-ProRule" id="PRU00408"/>
    </source>
</evidence>
<evidence type="ECO:0000305" key="3"/>
<accession>P0A2C0</accession>
<accession>P23329</accession>
<proteinExistence type="inferred from homology"/>
<feature type="chain" id="PRO_0000195401" description="Ribonuclease HI">
    <location>
        <begin position="1"/>
        <end position="155"/>
    </location>
</feature>
<feature type="domain" description="RNase H type-1" evidence="2">
    <location>
        <begin position="1"/>
        <end position="142"/>
    </location>
</feature>
<feature type="binding site" evidence="1">
    <location>
        <position position="10"/>
    </location>
    <ligand>
        <name>Mg(2+)</name>
        <dbReference type="ChEBI" id="CHEBI:18420"/>
        <label>1</label>
    </ligand>
</feature>
<feature type="binding site" evidence="1">
    <location>
        <position position="10"/>
    </location>
    <ligand>
        <name>Mg(2+)</name>
        <dbReference type="ChEBI" id="CHEBI:18420"/>
        <label>2</label>
    </ligand>
</feature>
<feature type="binding site" evidence="1">
    <location>
        <position position="48"/>
    </location>
    <ligand>
        <name>Mg(2+)</name>
        <dbReference type="ChEBI" id="CHEBI:18420"/>
        <label>1</label>
    </ligand>
</feature>
<feature type="binding site" evidence="1">
    <location>
        <position position="70"/>
    </location>
    <ligand>
        <name>Mg(2+)</name>
        <dbReference type="ChEBI" id="CHEBI:18420"/>
        <label>1</label>
    </ligand>
</feature>
<feature type="binding site" evidence="1">
    <location>
        <position position="134"/>
    </location>
    <ligand>
        <name>Mg(2+)</name>
        <dbReference type="ChEBI" id="CHEBI:18420"/>
        <label>2</label>
    </ligand>
</feature>
<comment type="function">
    <text evidence="1">Endonuclease that specifically degrades the RNA of RNA-DNA hybrids.</text>
</comment>
<comment type="catalytic activity">
    <reaction>
        <text>Endonucleolytic cleavage to 5'-phosphomonoester.</text>
        <dbReference type="EC" id="3.1.26.4"/>
    </reaction>
</comment>
<comment type="cofactor">
    <cofactor evidence="1">
        <name>Mg(2+)</name>
        <dbReference type="ChEBI" id="CHEBI:18420"/>
    </cofactor>
    <text evidence="1">Binds 1 Mg(2+) ion per subunit. May bind a second metal ion at a regulatory site, or after substrate binding.</text>
</comment>
<comment type="subunit">
    <text evidence="1">Monomer.</text>
</comment>
<comment type="subcellular location">
    <subcellularLocation>
        <location evidence="3">Cytoplasm</location>
    </subcellularLocation>
</comment>
<comment type="similarity">
    <text evidence="3">Belongs to the RNase H family.</text>
</comment>
<dbReference type="EC" id="3.1.26.4"/>
<dbReference type="EMBL" id="AL513382">
    <property type="protein sequence ID" value="CAD08717.1"/>
    <property type="molecule type" value="Genomic_DNA"/>
</dbReference>
<dbReference type="EMBL" id="AE014613">
    <property type="protein sequence ID" value="AAO70178.1"/>
    <property type="molecule type" value="Genomic_DNA"/>
</dbReference>
<dbReference type="RefSeq" id="NP_454866.1">
    <property type="nucleotide sequence ID" value="NC_003198.1"/>
</dbReference>
<dbReference type="RefSeq" id="WP_000917872.1">
    <property type="nucleotide sequence ID" value="NZ_WSUR01000037.1"/>
</dbReference>
<dbReference type="SMR" id="P0A2C0"/>
<dbReference type="STRING" id="220341.gene:17584320"/>
<dbReference type="KEGG" id="stt:t2602"/>
<dbReference type="KEGG" id="sty:STY0284"/>
<dbReference type="PATRIC" id="fig|220341.7.peg.286"/>
<dbReference type="eggNOG" id="COG0328">
    <property type="taxonomic scope" value="Bacteria"/>
</dbReference>
<dbReference type="HOGENOM" id="CLU_030894_6_0_6"/>
<dbReference type="OMA" id="MQEIEIF"/>
<dbReference type="OrthoDB" id="7845843at2"/>
<dbReference type="Proteomes" id="UP000000541">
    <property type="component" value="Chromosome"/>
</dbReference>
<dbReference type="Proteomes" id="UP000002670">
    <property type="component" value="Chromosome"/>
</dbReference>
<dbReference type="GO" id="GO:0005737">
    <property type="term" value="C:cytoplasm"/>
    <property type="evidence" value="ECO:0007669"/>
    <property type="project" value="UniProtKB-SubCell"/>
</dbReference>
<dbReference type="GO" id="GO:0000287">
    <property type="term" value="F:magnesium ion binding"/>
    <property type="evidence" value="ECO:0007669"/>
    <property type="project" value="UniProtKB-UniRule"/>
</dbReference>
<dbReference type="GO" id="GO:0003676">
    <property type="term" value="F:nucleic acid binding"/>
    <property type="evidence" value="ECO:0007669"/>
    <property type="project" value="InterPro"/>
</dbReference>
<dbReference type="GO" id="GO:0004523">
    <property type="term" value="F:RNA-DNA hybrid ribonuclease activity"/>
    <property type="evidence" value="ECO:0007669"/>
    <property type="project" value="UniProtKB-UniRule"/>
</dbReference>
<dbReference type="GO" id="GO:0043137">
    <property type="term" value="P:DNA replication, removal of RNA primer"/>
    <property type="evidence" value="ECO:0007669"/>
    <property type="project" value="TreeGrafter"/>
</dbReference>
<dbReference type="CDD" id="cd09278">
    <property type="entry name" value="RNase_HI_prokaryote_like"/>
    <property type="match status" value="1"/>
</dbReference>
<dbReference type="FunFam" id="3.30.420.10:FF:000008">
    <property type="entry name" value="Ribonuclease H"/>
    <property type="match status" value="1"/>
</dbReference>
<dbReference type="Gene3D" id="3.30.420.10">
    <property type="entry name" value="Ribonuclease H-like superfamily/Ribonuclease H"/>
    <property type="match status" value="1"/>
</dbReference>
<dbReference type="HAMAP" id="MF_00042">
    <property type="entry name" value="RNase_H"/>
    <property type="match status" value="1"/>
</dbReference>
<dbReference type="InterPro" id="IPR050092">
    <property type="entry name" value="RNase_H"/>
</dbReference>
<dbReference type="InterPro" id="IPR012337">
    <property type="entry name" value="RNaseH-like_sf"/>
</dbReference>
<dbReference type="InterPro" id="IPR002156">
    <property type="entry name" value="RNaseH_domain"/>
</dbReference>
<dbReference type="InterPro" id="IPR036397">
    <property type="entry name" value="RNaseH_sf"/>
</dbReference>
<dbReference type="InterPro" id="IPR022892">
    <property type="entry name" value="RNaseHI"/>
</dbReference>
<dbReference type="NCBIfam" id="NF001236">
    <property type="entry name" value="PRK00203.1"/>
    <property type="match status" value="1"/>
</dbReference>
<dbReference type="PANTHER" id="PTHR10642">
    <property type="entry name" value="RIBONUCLEASE H1"/>
    <property type="match status" value="1"/>
</dbReference>
<dbReference type="PANTHER" id="PTHR10642:SF26">
    <property type="entry name" value="RIBONUCLEASE H1"/>
    <property type="match status" value="1"/>
</dbReference>
<dbReference type="Pfam" id="PF00075">
    <property type="entry name" value="RNase_H"/>
    <property type="match status" value="1"/>
</dbReference>
<dbReference type="SUPFAM" id="SSF53098">
    <property type="entry name" value="Ribonuclease H-like"/>
    <property type="match status" value="1"/>
</dbReference>
<dbReference type="PROSITE" id="PS50879">
    <property type="entry name" value="RNASE_H_1"/>
    <property type="match status" value="1"/>
</dbReference>
<protein>
    <recommendedName>
        <fullName>Ribonuclease HI</fullName>
        <shortName>RNase HI</shortName>
        <ecNumber>3.1.26.4</ecNumber>
    </recommendedName>
</protein>
<name>RNH_SALTI</name>
<sequence length="155" mass="17510">MLKQVEIFTDGSCLGNPGPGGYGAILRYRGHEKTFSEGYTLTTNNRMELMAAIVALEALKEHCEVTLSTDSQYVRQGITQWIHNWKKRGWKTAEKKPVKNVDLWKRLDAALGQHQIKWVWVKGHAGHPENERCDELARAAAMNPTQEDSGYQAEA</sequence>
<gene>
    <name type="primary">rnhA</name>
    <name type="synonym">rnh</name>
    <name type="ordered locus">STY0284</name>
    <name type="ordered locus">t2602</name>
</gene>